<reference key="1">
    <citation type="journal article" date="2005" name="Nucleic Acids Res.">
        <title>Genome dynamics and diversity of Shigella species, the etiologic agents of bacillary dysentery.</title>
        <authorList>
            <person name="Yang F."/>
            <person name="Yang J."/>
            <person name="Zhang X."/>
            <person name="Chen L."/>
            <person name="Jiang Y."/>
            <person name="Yan Y."/>
            <person name="Tang X."/>
            <person name="Wang J."/>
            <person name="Xiong Z."/>
            <person name="Dong J."/>
            <person name="Xue Y."/>
            <person name="Zhu Y."/>
            <person name="Xu X."/>
            <person name="Sun L."/>
            <person name="Chen S."/>
            <person name="Nie H."/>
            <person name="Peng J."/>
            <person name="Xu J."/>
            <person name="Wang Y."/>
            <person name="Yuan Z."/>
            <person name="Wen Y."/>
            <person name="Yao Z."/>
            <person name="Shen Y."/>
            <person name="Qiang B."/>
            <person name="Hou Y."/>
            <person name="Yu J."/>
            <person name="Jin Q."/>
        </authorList>
    </citation>
    <scope>NUCLEOTIDE SEQUENCE [LARGE SCALE GENOMIC DNA]</scope>
    <source>
        <strain>Sd197</strain>
    </source>
</reference>
<name>ZNUC_SHIDS</name>
<proteinExistence type="inferred from homology"/>
<gene>
    <name evidence="1" type="primary">znuC</name>
    <name type="ordered locus">SDY_1145</name>
</gene>
<protein>
    <recommendedName>
        <fullName evidence="1">Zinc import ATP-binding protein ZnuC</fullName>
        <ecNumber evidence="1">7.2.2.20</ecNumber>
    </recommendedName>
</protein>
<evidence type="ECO:0000255" key="1">
    <source>
        <dbReference type="HAMAP-Rule" id="MF_01725"/>
    </source>
</evidence>
<dbReference type="EC" id="7.2.2.20" evidence="1"/>
<dbReference type="EMBL" id="CP000034">
    <property type="protein sequence ID" value="ABB61302.1"/>
    <property type="molecule type" value="Genomic_DNA"/>
</dbReference>
<dbReference type="RefSeq" id="WP_000202986.1">
    <property type="nucleotide sequence ID" value="NC_007606.1"/>
</dbReference>
<dbReference type="RefSeq" id="YP_402793.1">
    <property type="nucleotide sequence ID" value="NC_007606.1"/>
</dbReference>
<dbReference type="SMR" id="Q32HA3"/>
<dbReference type="STRING" id="300267.SDY_1145"/>
<dbReference type="EnsemblBacteria" id="ABB61302">
    <property type="protein sequence ID" value="ABB61302"/>
    <property type="gene ID" value="SDY_1145"/>
</dbReference>
<dbReference type="KEGG" id="sdy:SDY_1145"/>
<dbReference type="PATRIC" id="fig|300267.13.peg.1348"/>
<dbReference type="HOGENOM" id="CLU_000604_1_11_6"/>
<dbReference type="Proteomes" id="UP000002716">
    <property type="component" value="Chromosome"/>
</dbReference>
<dbReference type="GO" id="GO:0005886">
    <property type="term" value="C:plasma membrane"/>
    <property type="evidence" value="ECO:0007669"/>
    <property type="project" value="UniProtKB-SubCell"/>
</dbReference>
<dbReference type="GO" id="GO:0015633">
    <property type="term" value="F:ABC-type zinc transporter activity"/>
    <property type="evidence" value="ECO:0007669"/>
    <property type="project" value="UniProtKB-EC"/>
</dbReference>
<dbReference type="GO" id="GO:0005524">
    <property type="term" value="F:ATP binding"/>
    <property type="evidence" value="ECO:0007669"/>
    <property type="project" value="UniProtKB-KW"/>
</dbReference>
<dbReference type="GO" id="GO:0016887">
    <property type="term" value="F:ATP hydrolysis activity"/>
    <property type="evidence" value="ECO:0007669"/>
    <property type="project" value="InterPro"/>
</dbReference>
<dbReference type="GO" id="GO:0010043">
    <property type="term" value="P:response to zinc ion"/>
    <property type="evidence" value="ECO:0007669"/>
    <property type="project" value="TreeGrafter"/>
</dbReference>
<dbReference type="CDD" id="cd03235">
    <property type="entry name" value="ABC_Metallic_Cations"/>
    <property type="match status" value="1"/>
</dbReference>
<dbReference type="FunFam" id="3.40.50.300:FF:000392">
    <property type="entry name" value="Zinc import ATP-binding protein ZnuC"/>
    <property type="match status" value="1"/>
</dbReference>
<dbReference type="Gene3D" id="3.40.50.300">
    <property type="entry name" value="P-loop containing nucleotide triphosphate hydrolases"/>
    <property type="match status" value="1"/>
</dbReference>
<dbReference type="InterPro" id="IPR003593">
    <property type="entry name" value="AAA+_ATPase"/>
</dbReference>
<dbReference type="InterPro" id="IPR003439">
    <property type="entry name" value="ABC_transporter-like_ATP-bd"/>
</dbReference>
<dbReference type="InterPro" id="IPR050153">
    <property type="entry name" value="Metal_Ion_Import_ABC"/>
</dbReference>
<dbReference type="InterPro" id="IPR027417">
    <property type="entry name" value="P-loop_NTPase"/>
</dbReference>
<dbReference type="NCBIfam" id="NF007090">
    <property type="entry name" value="PRK09544.1"/>
    <property type="match status" value="1"/>
</dbReference>
<dbReference type="PANTHER" id="PTHR42734">
    <property type="entry name" value="METAL TRANSPORT SYSTEM ATP-BINDING PROTEIN TM_0124-RELATED"/>
    <property type="match status" value="1"/>
</dbReference>
<dbReference type="PANTHER" id="PTHR42734:SF9">
    <property type="entry name" value="ZINC IMPORT ATP-BINDING PROTEIN ZNUC"/>
    <property type="match status" value="1"/>
</dbReference>
<dbReference type="Pfam" id="PF00005">
    <property type="entry name" value="ABC_tran"/>
    <property type="match status" value="1"/>
</dbReference>
<dbReference type="SMART" id="SM00382">
    <property type="entry name" value="AAA"/>
    <property type="match status" value="1"/>
</dbReference>
<dbReference type="SUPFAM" id="SSF52540">
    <property type="entry name" value="P-loop containing nucleoside triphosphate hydrolases"/>
    <property type="match status" value="1"/>
</dbReference>
<dbReference type="PROSITE" id="PS50893">
    <property type="entry name" value="ABC_TRANSPORTER_2"/>
    <property type="match status" value="1"/>
</dbReference>
<dbReference type="PROSITE" id="PS51298">
    <property type="entry name" value="ZNUC"/>
    <property type="match status" value="1"/>
</dbReference>
<sequence length="251" mass="27882">MTSLVSLENVSVSFGQRRVLSDVSLELKPGKILTLLGPNGAGKSTLVRVVLGLVTPDEGVIKRNGKLRIGYVPQKLYLDTTLPLTVKRFLRLRPGTHKEDILPALKRVQAGHLINAPMQKLSGGETQRVLLARALLNRPQLLVLDEPTQGVDVNGQVALYDLIDQLRRELDCGVLMVSHDLHLVMAKTDEVLCLNHHICCSGTPEVVSLHPEFISMFGPRGAEQLGIYRHHHNHRHDLQGRIVLRRGNDRS</sequence>
<accession>Q32HA3</accession>
<feature type="chain" id="PRO_0000281551" description="Zinc import ATP-binding protein ZnuC">
    <location>
        <begin position="1"/>
        <end position="251"/>
    </location>
</feature>
<feature type="domain" description="ABC transporter" evidence="1">
    <location>
        <begin position="5"/>
        <end position="220"/>
    </location>
</feature>
<feature type="binding site" evidence="1">
    <location>
        <begin position="37"/>
        <end position="44"/>
    </location>
    <ligand>
        <name>ATP</name>
        <dbReference type="ChEBI" id="CHEBI:30616"/>
    </ligand>
</feature>
<comment type="function">
    <text evidence="1">Part of the ABC transporter complex ZnuABC involved in zinc import. Responsible for energy coupling to the transport system.</text>
</comment>
<comment type="catalytic activity">
    <reaction evidence="1">
        <text>Zn(2+)(out) + ATP(in) + H2O(in) = Zn(2+)(in) + ADP(in) + phosphate(in) + H(+)(in)</text>
        <dbReference type="Rhea" id="RHEA:29795"/>
        <dbReference type="ChEBI" id="CHEBI:15377"/>
        <dbReference type="ChEBI" id="CHEBI:15378"/>
        <dbReference type="ChEBI" id="CHEBI:29105"/>
        <dbReference type="ChEBI" id="CHEBI:30616"/>
        <dbReference type="ChEBI" id="CHEBI:43474"/>
        <dbReference type="ChEBI" id="CHEBI:456216"/>
        <dbReference type="EC" id="7.2.2.20"/>
    </reaction>
</comment>
<comment type="subunit">
    <text evidence="1">The complex is composed of two ATP-binding proteins (ZnuC), two transmembrane proteins (ZnuB) and a solute-binding protein (ZnuA).</text>
</comment>
<comment type="subcellular location">
    <subcellularLocation>
        <location evidence="1">Cell inner membrane</location>
        <topology evidence="1">Peripheral membrane protein</topology>
    </subcellularLocation>
</comment>
<comment type="similarity">
    <text evidence="1">Belongs to the ABC transporter superfamily. Zinc importer (TC 3.A.1.15.5) family.</text>
</comment>
<organism>
    <name type="scientific">Shigella dysenteriae serotype 1 (strain Sd197)</name>
    <dbReference type="NCBI Taxonomy" id="300267"/>
    <lineage>
        <taxon>Bacteria</taxon>
        <taxon>Pseudomonadati</taxon>
        <taxon>Pseudomonadota</taxon>
        <taxon>Gammaproteobacteria</taxon>
        <taxon>Enterobacterales</taxon>
        <taxon>Enterobacteriaceae</taxon>
        <taxon>Shigella</taxon>
    </lineage>
</organism>
<keyword id="KW-0067">ATP-binding</keyword>
<keyword id="KW-0997">Cell inner membrane</keyword>
<keyword id="KW-1003">Cell membrane</keyword>
<keyword id="KW-0406">Ion transport</keyword>
<keyword id="KW-0472">Membrane</keyword>
<keyword id="KW-0547">Nucleotide-binding</keyword>
<keyword id="KW-1185">Reference proteome</keyword>
<keyword id="KW-1278">Translocase</keyword>
<keyword id="KW-0813">Transport</keyword>
<keyword id="KW-0862">Zinc</keyword>
<keyword id="KW-0864">Zinc transport</keyword>